<comment type="function">
    <text evidence="1">Specifically methylates the N4 position of cytidine in position 1402 (C1402) of 16S rRNA.</text>
</comment>
<comment type="catalytic activity">
    <reaction evidence="1">
        <text>cytidine(1402) in 16S rRNA + S-adenosyl-L-methionine = N(4)-methylcytidine(1402) in 16S rRNA + S-adenosyl-L-homocysteine + H(+)</text>
        <dbReference type="Rhea" id="RHEA:42928"/>
        <dbReference type="Rhea" id="RHEA-COMP:10286"/>
        <dbReference type="Rhea" id="RHEA-COMP:10287"/>
        <dbReference type="ChEBI" id="CHEBI:15378"/>
        <dbReference type="ChEBI" id="CHEBI:57856"/>
        <dbReference type="ChEBI" id="CHEBI:59789"/>
        <dbReference type="ChEBI" id="CHEBI:74506"/>
        <dbReference type="ChEBI" id="CHEBI:82748"/>
        <dbReference type="EC" id="2.1.1.199"/>
    </reaction>
</comment>
<comment type="subcellular location">
    <subcellularLocation>
        <location evidence="1">Cytoplasm</location>
    </subcellularLocation>
</comment>
<comment type="similarity">
    <text evidence="1">Belongs to the methyltransferase superfamily. RsmH family.</text>
</comment>
<reference key="1">
    <citation type="journal article" date="2008" name="J. Bacteriol.">
        <title>Genome sequence of a nephritogenic and highly transformable M49 strain of Streptococcus pyogenes.</title>
        <authorList>
            <person name="McShan W.M."/>
            <person name="Ferretti J.J."/>
            <person name="Karasawa T."/>
            <person name="Suvorov A.N."/>
            <person name="Lin S."/>
            <person name="Qin B."/>
            <person name="Jia H."/>
            <person name="Kenton S."/>
            <person name="Najar F."/>
            <person name="Wu H."/>
            <person name="Scott J."/>
            <person name="Roe B.A."/>
            <person name="Savic D.J."/>
        </authorList>
    </citation>
    <scope>NUCLEOTIDE SEQUENCE [LARGE SCALE GENOMIC DNA]</scope>
    <source>
        <strain>NZ131</strain>
    </source>
</reference>
<accession>B5XML3</accession>
<name>RSMH_STRPZ</name>
<organism>
    <name type="scientific">Streptococcus pyogenes serotype M49 (strain NZ131)</name>
    <dbReference type="NCBI Taxonomy" id="471876"/>
    <lineage>
        <taxon>Bacteria</taxon>
        <taxon>Bacillati</taxon>
        <taxon>Bacillota</taxon>
        <taxon>Bacilli</taxon>
        <taxon>Lactobacillales</taxon>
        <taxon>Streptococcaceae</taxon>
        <taxon>Streptococcus</taxon>
    </lineage>
</organism>
<gene>
    <name evidence="1" type="primary">rsmH</name>
    <name type="synonym">mraW</name>
    <name type="ordered locus">Spy49_1293c</name>
</gene>
<protein>
    <recommendedName>
        <fullName evidence="1">Ribosomal RNA small subunit methyltransferase H</fullName>
        <ecNumber evidence="1">2.1.1.199</ecNumber>
    </recommendedName>
    <alternativeName>
        <fullName evidence="1">16S rRNA m(4)C1402 methyltransferase</fullName>
    </alternativeName>
    <alternativeName>
        <fullName evidence="1">rRNA (cytosine-N(4)-)-methyltransferase RsmH</fullName>
    </alternativeName>
</protein>
<proteinExistence type="inferred from homology"/>
<dbReference type="EC" id="2.1.1.199" evidence="1"/>
<dbReference type="EMBL" id="CP000829">
    <property type="protein sequence ID" value="ACI61575.1"/>
    <property type="molecule type" value="Genomic_DNA"/>
</dbReference>
<dbReference type="SMR" id="B5XML3"/>
<dbReference type="KEGG" id="soz:Spy49_1293c"/>
<dbReference type="HOGENOM" id="CLU_038422_2_0_9"/>
<dbReference type="Proteomes" id="UP000001039">
    <property type="component" value="Chromosome"/>
</dbReference>
<dbReference type="GO" id="GO:0005737">
    <property type="term" value="C:cytoplasm"/>
    <property type="evidence" value="ECO:0007669"/>
    <property type="project" value="UniProtKB-SubCell"/>
</dbReference>
<dbReference type="GO" id="GO:0071424">
    <property type="term" value="F:rRNA (cytosine-N4-)-methyltransferase activity"/>
    <property type="evidence" value="ECO:0007669"/>
    <property type="project" value="UniProtKB-UniRule"/>
</dbReference>
<dbReference type="GO" id="GO:0070475">
    <property type="term" value="P:rRNA base methylation"/>
    <property type="evidence" value="ECO:0007669"/>
    <property type="project" value="UniProtKB-UniRule"/>
</dbReference>
<dbReference type="FunFam" id="1.10.150.170:FF:000001">
    <property type="entry name" value="Ribosomal RNA small subunit methyltransferase H"/>
    <property type="match status" value="1"/>
</dbReference>
<dbReference type="Gene3D" id="1.10.150.170">
    <property type="entry name" value="Putative methyltransferase TM0872, insert domain"/>
    <property type="match status" value="1"/>
</dbReference>
<dbReference type="Gene3D" id="3.40.50.150">
    <property type="entry name" value="Vaccinia Virus protein VP39"/>
    <property type="match status" value="1"/>
</dbReference>
<dbReference type="HAMAP" id="MF_01007">
    <property type="entry name" value="16SrRNA_methyltr_H"/>
    <property type="match status" value="1"/>
</dbReference>
<dbReference type="InterPro" id="IPR002903">
    <property type="entry name" value="RsmH"/>
</dbReference>
<dbReference type="InterPro" id="IPR023397">
    <property type="entry name" value="SAM-dep_MeTrfase_MraW_recog"/>
</dbReference>
<dbReference type="InterPro" id="IPR029063">
    <property type="entry name" value="SAM-dependent_MTases_sf"/>
</dbReference>
<dbReference type="NCBIfam" id="TIGR00006">
    <property type="entry name" value="16S rRNA (cytosine(1402)-N(4))-methyltransferase RsmH"/>
    <property type="match status" value="1"/>
</dbReference>
<dbReference type="PANTHER" id="PTHR11265:SF0">
    <property type="entry name" value="12S RRNA N4-METHYLCYTIDINE METHYLTRANSFERASE"/>
    <property type="match status" value="1"/>
</dbReference>
<dbReference type="PANTHER" id="PTHR11265">
    <property type="entry name" value="S-ADENOSYL-METHYLTRANSFERASE MRAW"/>
    <property type="match status" value="1"/>
</dbReference>
<dbReference type="Pfam" id="PF01795">
    <property type="entry name" value="Methyltransf_5"/>
    <property type="match status" value="1"/>
</dbReference>
<dbReference type="PIRSF" id="PIRSF004486">
    <property type="entry name" value="MraW"/>
    <property type="match status" value="1"/>
</dbReference>
<dbReference type="SUPFAM" id="SSF81799">
    <property type="entry name" value="Putative methyltransferase TM0872, insert domain"/>
    <property type="match status" value="1"/>
</dbReference>
<dbReference type="SUPFAM" id="SSF53335">
    <property type="entry name" value="S-adenosyl-L-methionine-dependent methyltransferases"/>
    <property type="match status" value="1"/>
</dbReference>
<keyword id="KW-0963">Cytoplasm</keyword>
<keyword id="KW-0489">Methyltransferase</keyword>
<keyword id="KW-0698">rRNA processing</keyword>
<keyword id="KW-0949">S-adenosyl-L-methionine</keyword>
<keyword id="KW-0808">Transferase</keyword>
<evidence type="ECO:0000255" key="1">
    <source>
        <dbReference type="HAMAP-Rule" id="MF_01007"/>
    </source>
</evidence>
<sequence length="316" mass="35658">MTKEFHHVTVLLHETVDMLDIKPDGIYVDATLGGSGHSAYLLSKLGEEGHLYCFDQDQKAIDNAQVTLKSYIDKGQVTFIKDNFRHLKARLTALGVDEIDGILYDLGVSSPQLDERERGFSYKQDAPLDMRMDRQSLLTAYEVVNTYPFNDLVKIFFKYGEDKFSKQIARKIEQARAIKPIEATTELAELIKAAKPAKELKKKGHPAKQIFQAIRIEVNDELGAADESIQDAMELLALDGRISVITFHSLEDRLTKQLFKEASTVDVPKGLPLIPEDMKPKFELVSRKPILPSHSELTANKRAHSAKLRVAKKIRK</sequence>
<feature type="chain" id="PRO_0000387162" description="Ribosomal RNA small subunit methyltransferase H">
    <location>
        <begin position="1"/>
        <end position="316"/>
    </location>
</feature>
<feature type="binding site" evidence="1">
    <location>
        <begin position="35"/>
        <end position="37"/>
    </location>
    <ligand>
        <name>S-adenosyl-L-methionine</name>
        <dbReference type="ChEBI" id="CHEBI:59789"/>
    </ligand>
</feature>
<feature type="binding site" evidence="1">
    <location>
        <position position="55"/>
    </location>
    <ligand>
        <name>S-adenosyl-L-methionine</name>
        <dbReference type="ChEBI" id="CHEBI:59789"/>
    </ligand>
</feature>
<feature type="binding site" evidence="1">
    <location>
        <position position="84"/>
    </location>
    <ligand>
        <name>S-adenosyl-L-methionine</name>
        <dbReference type="ChEBI" id="CHEBI:59789"/>
    </ligand>
</feature>
<feature type="binding site" evidence="1">
    <location>
        <position position="105"/>
    </location>
    <ligand>
        <name>S-adenosyl-L-methionine</name>
        <dbReference type="ChEBI" id="CHEBI:59789"/>
    </ligand>
</feature>
<feature type="binding site" evidence="1">
    <location>
        <position position="112"/>
    </location>
    <ligand>
        <name>S-adenosyl-L-methionine</name>
        <dbReference type="ChEBI" id="CHEBI:59789"/>
    </ligand>
</feature>